<evidence type="ECO:0000255" key="1">
    <source>
        <dbReference type="HAMAP-Rule" id="MF_00093"/>
    </source>
</evidence>
<evidence type="ECO:0000256" key="2">
    <source>
        <dbReference type="SAM" id="MobiDB-lite"/>
    </source>
</evidence>
<dbReference type="EMBL" id="AE017125">
    <property type="protein sequence ID" value="AAP78374.1"/>
    <property type="molecule type" value="Genomic_DNA"/>
</dbReference>
<dbReference type="RefSeq" id="WP_011116616.1">
    <property type="nucleotide sequence ID" value="NC_004917.1"/>
</dbReference>
<dbReference type="SMR" id="Q7VFA0"/>
<dbReference type="STRING" id="235279.HH_1777"/>
<dbReference type="KEGG" id="hhe:HH_1777"/>
<dbReference type="eggNOG" id="COG0216">
    <property type="taxonomic scope" value="Bacteria"/>
</dbReference>
<dbReference type="HOGENOM" id="CLU_036856_0_1_7"/>
<dbReference type="OrthoDB" id="9806673at2"/>
<dbReference type="Proteomes" id="UP000002495">
    <property type="component" value="Chromosome"/>
</dbReference>
<dbReference type="GO" id="GO:0005737">
    <property type="term" value="C:cytoplasm"/>
    <property type="evidence" value="ECO:0007669"/>
    <property type="project" value="UniProtKB-SubCell"/>
</dbReference>
<dbReference type="GO" id="GO:0016149">
    <property type="term" value="F:translation release factor activity, codon specific"/>
    <property type="evidence" value="ECO:0007669"/>
    <property type="project" value="UniProtKB-UniRule"/>
</dbReference>
<dbReference type="FunFam" id="3.30.160.20:FF:000004">
    <property type="entry name" value="Peptide chain release factor 1"/>
    <property type="match status" value="1"/>
</dbReference>
<dbReference type="FunFam" id="3.30.70.1660:FF:000002">
    <property type="entry name" value="Peptide chain release factor 1"/>
    <property type="match status" value="1"/>
</dbReference>
<dbReference type="FunFam" id="3.30.70.1660:FF:000004">
    <property type="entry name" value="Peptide chain release factor 1"/>
    <property type="match status" value="1"/>
</dbReference>
<dbReference type="Gene3D" id="3.30.160.20">
    <property type="match status" value="1"/>
</dbReference>
<dbReference type="Gene3D" id="3.30.70.1660">
    <property type="match status" value="1"/>
</dbReference>
<dbReference type="Gene3D" id="6.10.140.1950">
    <property type="match status" value="1"/>
</dbReference>
<dbReference type="HAMAP" id="MF_00093">
    <property type="entry name" value="Rel_fac_1"/>
    <property type="match status" value="1"/>
</dbReference>
<dbReference type="InterPro" id="IPR005139">
    <property type="entry name" value="PCRF"/>
</dbReference>
<dbReference type="InterPro" id="IPR000352">
    <property type="entry name" value="Pep_chain_release_fac_I"/>
</dbReference>
<dbReference type="InterPro" id="IPR045853">
    <property type="entry name" value="Pep_chain_release_fac_I_sf"/>
</dbReference>
<dbReference type="InterPro" id="IPR050057">
    <property type="entry name" value="Prokaryotic/Mito_RF"/>
</dbReference>
<dbReference type="InterPro" id="IPR004373">
    <property type="entry name" value="RF-1"/>
</dbReference>
<dbReference type="NCBIfam" id="TIGR00019">
    <property type="entry name" value="prfA"/>
    <property type="match status" value="1"/>
</dbReference>
<dbReference type="NCBIfam" id="NF001859">
    <property type="entry name" value="PRK00591.1"/>
    <property type="match status" value="1"/>
</dbReference>
<dbReference type="PANTHER" id="PTHR43804">
    <property type="entry name" value="LD18447P"/>
    <property type="match status" value="1"/>
</dbReference>
<dbReference type="PANTHER" id="PTHR43804:SF7">
    <property type="entry name" value="LD18447P"/>
    <property type="match status" value="1"/>
</dbReference>
<dbReference type="Pfam" id="PF03462">
    <property type="entry name" value="PCRF"/>
    <property type="match status" value="1"/>
</dbReference>
<dbReference type="Pfam" id="PF00472">
    <property type="entry name" value="RF-1"/>
    <property type="match status" value="1"/>
</dbReference>
<dbReference type="SMART" id="SM00937">
    <property type="entry name" value="PCRF"/>
    <property type="match status" value="1"/>
</dbReference>
<dbReference type="SUPFAM" id="SSF75620">
    <property type="entry name" value="Release factor"/>
    <property type="match status" value="1"/>
</dbReference>
<dbReference type="PROSITE" id="PS00745">
    <property type="entry name" value="RF_PROK_I"/>
    <property type="match status" value="1"/>
</dbReference>
<name>RF1_HELHP</name>
<proteinExistence type="inferred from homology"/>
<comment type="function">
    <text evidence="1">Peptide chain release factor 1 directs the termination of translation in response to the peptide chain termination codons UAG and UAA.</text>
</comment>
<comment type="subcellular location">
    <subcellularLocation>
        <location evidence="1">Cytoplasm</location>
    </subcellularLocation>
</comment>
<comment type="PTM">
    <text evidence="1">Methylated by PrmC. Methylation increases the termination efficiency of RF1.</text>
</comment>
<comment type="similarity">
    <text evidence="1">Belongs to the prokaryotic/mitochondrial release factor family.</text>
</comment>
<feature type="chain" id="PRO_0000177680" description="Peptide chain release factor 1">
    <location>
        <begin position="1"/>
        <end position="355"/>
    </location>
</feature>
<feature type="region of interest" description="Disordered" evidence="2">
    <location>
        <begin position="283"/>
        <end position="303"/>
    </location>
</feature>
<feature type="modified residue" description="N5-methylglutamine" evidence="1">
    <location>
        <position position="231"/>
    </location>
</feature>
<protein>
    <recommendedName>
        <fullName evidence="1">Peptide chain release factor 1</fullName>
        <shortName evidence="1">RF-1</shortName>
    </recommendedName>
</protein>
<sequence length="355" mass="39552">MLIDKLKPIVARYDEISSLLSSESVLSNIKQLTELSKEQSDIESIAQNAKTYFSILENIVQNKALLEDKELGELAKEELKDLESAKATLEEEIKLLLIPKDPNDNKNIYLEIRAGTGGDEAGIFVGDLFKAYCRYADLQKWKVEIISSNENNVGGYKEVIALVKGNGAYSKLKFEGGTHRVQRVPETESQGRIHTSAITVAIMPEVDDVEININPNDLKIDVFRSGGHGGQSVNTTDSAVRITHIPTGISVSMQDEKSQHKNKDKALKILKARLYEAELEAQNAQNKEARKTQVGSGDRSERIRTYNYPQNRLTDHRIGLTLYSLEEIMLGGLLDEFINPLIAHAQSQAMGNIEQ</sequence>
<keyword id="KW-0963">Cytoplasm</keyword>
<keyword id="KW-0488">Methylation</keyword>
<keyword id="KW-0648">Protein biosynthesis</keyword>
<keyword id="KW-1185">Reference proteome</keyword>
<organism>
    <name type="scientific">Helicobacter hepaticus (strain ATCC 51449 / 3B1)</name>
    <dbReference type="NCBI Taxonomy" id="235279"/>
    <lineage>
        <taxon>Bacteria</taxon>
        <taxon>Pseudomonadati</taxon>
        <taxon>Campylobacterota</taxon>
        <taxon>Epsilonproteobacteria</taxon>
        <taxon>Campylobacterales</taxon>
        <taxon>Helicobacteraceae</taxon>
        <taxon>Helicobacter</taxon>
    </lineage>
</organism>
<reference key="1">
    <citation type="journal article" date="2003" name="Proc. Natl. Acad. Sci. U.S.A.">
        <title>The complete genome sequence of the carcinogenic bacterium Helicobacter hepaticus.</title>
        <authorList>
            <person name="Suerbaum S."/>
            <person name="Josenhans C."/>
            <person name="Sterzenbach T."/>
            <person name="Drescher B."/>
            <person name="Brandt P."/>
            <person name="Bell M."/>
            <person name="Droege M."/>
            <person name="Fartmann B."/>
            <person name="Fischer H.-P."/>
            <person name="Ge Z."/>
            <person name="Hoerster A."/>
            <person name="Holland R."/>
            <person name="Klein K."/>
            <person name="Koenig J."/>
            <person name="Macko L."/>
            <person name="Mendz G.L."/>
            <person name="Nyakatura G."/>
            <person name="Schauer D.B."/>
            <person name="Shen Z."/>
            <person name="Weber J."/>
            <person name="Frosch M."/>
            <person name="Fox J.G."/>
        </authorList>
    </citation>
    <scope>NUCLEOTIDE SEQUENCE [LARGE SCALE GENOMIC DNA]</scope>
    <source>
        <strain>ATCC 51449 / 3B1</strain>
    </source>
</reference>
<accession>Q7VFA0</accession>
<gene>
    <name evidence="1" type="primary">prfA</name>
    <name type="ordered locus">HH_1777</name>
</gene>